<evidence type="ECO:0000250" key="1">
    <source>
        <dbReference type="UniProtKB" id="Q08AH3"/>
    </source>
</evidence>
<evidence type="ECO:0000269" key="2">
    <source>
    </source>
</evidence>
<evidence type="ECO:0000303" key="3">
    <source>
    </source>
</evidence>
<evidence type="ECO:0000305" key="4"/>
<evidence type="ECO:0000305" key="5">
    <source>
    </source>
</evidence>
<protein>
    <recommendedName>
        <fullName evidence="3">Acyl-CoA ligase oryP</fullName>
        <ecNumber evidence="5">6.2.-.-</ecNumber>
    </recommendedName>
    <alternativeName>
        <fullName evidence="3">Oryzines biosynthesis cluster protein P</fullName>
    </alternativeName>
</protein>
<sequence>MILPADPIFSQLLLIARNSPDEVVIDDRNLHVQAGYSHLLHDAVQLAQQLRDSLSQGPSTVGSAFIGILAPTSYESTVASLAILAVGAAGASLEELAYTLKQCSATCVLVGSQHQQTKLATQLQEQTGILKLAIPVLSPGRPPIESYTLDEDSIPSDDLPAFLFFTSGTTGAPKGVLHARRYLYAKFSVQQSELTDELCLIYDSICWSTCFISVLLHILRGERVELHELDARYDLIWDRFRDCEITKIHFSPTSWYTMMKVFQERISKLPEPSVQAYIRGAQYIRTPITLGGILPVPVKQFWLNLRGGRPIKVIYGSTEAGLLTVADPEASASEEASIGSPAPNVTVKLSDGDSGELLVKAPTLLLQYLNSPELTASCFDSEGFYKTGDLVERQGKNFIFRGRYKADFFKFWDHKIPRLHVESCLSSLPYIEEAHILPVADARCDNRVAALVRLRQDHTCVTLQSIRKDLSTMLPVYQMPTLLRILGKGDEVPRTFSEKVAMKKTVERFFPRWNNDHFMDDSIEVLGIKEILQFDTTGPLELVELW</sequence>
<organism>
    <name type="scientific">Aspergillus oryzae (strain ATCC 42149 / RIB 40)</name>
    <name type="common">Yellow koji mold</name>
    <dbReference type="NCBI Taxonomy" id="510516"/>
    <lineage>
        <taxon>Eukaryota</taxon>
        <taxon>Fungi</taxon>
        <taxon>Dikarya</taxon>
        <taxon>Ascomycota</taxon>
        <taxon>Pezizomycotina</taxon>
        <taxon>Eurotiomycetes</taxon>
        <taxon>Eurotiomycetidae</taxon>
        <taxon>Eurotiales</taxon>
        <taxon>Aspergillaceae</taxon>
        <taxon>Aspergillus</taxon>
        <taxon>Aspergillus subgen. Circumdati</taxon>
    </lineage>
</organism>
<accession>P9WEZ0</accession>
<name>ORYP_ASPOR</name>
<gene>
    <name evidence="3" type="primary">oryP</name>
</gene>
<proteinExistence type="inferred from homology"/>
<feature type="chain" id="PRO_0000450496" description="Acyl-CoA ligase oryP">
    <location>
        <begin position="1"/>
        <end position="546"/>
    </location>
</feature>
<feature type="binding site" evidence="1">
    <location>
        <begin position="166"/>
        <end position="174"/>
    </location>
    <ligand>
        <name>ATP</name>
        <dbReference type="ChEBI" id="CHEBI:30616"/>
    </ligand>
</feature>
<feature type="binding site" evidence="1">
    <location>
        <begin position="300"/>
        <end position="305"/>
    </location>
    <ligand>
        <name>ATP</name>
        <dbReference type="ChEBI" id="CHEBI:30616"/>
    </ligand>
</feature>
<feature type="binding site" evidence="1">
    <location>
        <position position="403"/>
    </location>
    <ligand>
        <name>ATP</name>
        <dbReference type="ChEBI" id="CHEBI:30616"/>
    </ligand>
</feature>
<feature type="binding site" evidence="1">
    <location>
        <begin position="412"/>
        <end position="414"/>
    </location>
    <ligand>
        <name>CoA</name>
        <dbReference type="ChEBI" id="CHEBI:57287"/>
    </ligand>
</feature>
<feature type="binding site" evidence="1">
    <location>
        <begin position="482"/>
        <end position="484"/>
    </location>
    <ligand>
        <name>CoA</name>
        <dbReference type="ChEBI" id="CHEBI:57287"/>
    </ligand>
</feature>
<feature type="binding site" evidence="1">
    <location>
        <position position="499"/>
    </location>
    <ligand>
        <name>ATP</name>
        <dbReference type="ChEBI" id="CHEBI:30616"/>
    </ligand>
</feature>
<comment type="function">
    <text evidence="2 5">Acyl-CoA ligase; part of the gene cluster that mediates the biosynthesis of oryzines, natural products with an unusual maleidride backbone (PubMed:30104550). The two subunits of the fungal fatty acid synthase oryfasA and oryfasB probably form octenoic acid (Probable). This fatty acid is most likely activated by the acyl-CoA ligase oryP to give octenyl-CoA before the citrate synthase-like protein oryE catalyzes condensation with oxaloacetate to form tricarboxylic acid (Probable). The next steps of the pathways are conjectural, but a favorite possible route has been proposed, beginning with decarboxylation and concomitant dehydration by the decarboxylase oryM, followed by tautomerization, which may lead to the production of a diene intermediate (Probable). Reduction of this diene intermediate could give the known metabolite piliformic acid (Probable). On the pathway to oryzine B and oryzine A, however, hydroxylation of the diene by the alpha-ketoglutarate-dependent dioxygenase oryG and lactonisation by the lactonohydrolases oryH or oryL could give oryzine B directly (Probable). Finally, enoyl reduction by the dehydrogenase oryD would then convert oryzine B into oryzine A (Probable).</text>
</comment>
<comment type="pathway">
    <text evidence="5">Secondary metabolite biosynthesis.</text>
</comment>
<comment type="similarity">
    <text evidence="4">Belongs to the ATP-dependent AMP-binding enzyme family.</text>
</comment>
<keyword id="KW-0067">ATP-binding</keyword>
<keyword id="KW-0436">Ligase</keyword>
<keyword id="KW-0547">Nucleotide-binding</keyword>
<keyword id="KW-1185">Reference proteome</keyword>
<dbReference type="EC" id="6.2.-.-" evidence="5"/>
<dbReference type="EMBL" id="AP007175">
    <property type="status" value="NOT_ANNOTATED_CDS"/>
    <property type="molecule type" value="Genomic_DNA"/>
</dbReference>
<dbReference type="SMR" id="P9WEZ0"/>
<dbReference type="Proteomes" id="UP000006564">
    <property type="component" value="Chromosome 8"/>
</dbReference>
<dbReference type="GO" id="GO:0005524">
    <property type="term" value="F:ATP binding"/>
    <property type="evidence" value="ECO:0007669"/>
    <property type="project" value="UniProtKB-KW"/>
</dbReference>
<dbReference type="GO" id="GO:0031956">
    <property type="term" value="F:medium-chain fatty acid-CoA ligase activity"/>
    <property type="evidence" value="ECO:0007669"/>
    <property type="project" value="TreeGrafter"/>
</dbReference>
<dbReference type="GO" id="GO:0006631">
    <property type="term" value="P:fatty acid metabolic process"/>
    <property type="evidence" value="ECO:0007669"/>
    <property type="project" value="TreeGrafter"/>
</dbReference>
<dbReference type="Gene3D" id="3.30.300.30">
    <property type="match status" value="1"/>
</dbReference>
<dbReference type="Gene3D" id="3.40.50.12780">
    <property type="entry name" value="N-terminal domain of ligase-like"/>
    <property type="match status" value="1"/>
</dbReference>
<dbReference type="InterPro" id="IPR045851">
    <property type="entry name" value="AMP-bd_C_sf"/>
</dbReference>
<dbReference type="InterPro" id="IPR020845">
    <property type="entry name" value="AMP-binding_CS"/>
</dbReference>
<dbReference type="InterPro" id="IPR000873">
    <property type="entry name" value="AMP-dep_synth/lig_dom"/>
</dbReference>
<dbReference type="InterPro" id="IPR042099">
    <property type="entry name" value="ANL_N_sf"/>
</dbReference>
<dbReference type="PANTHER" id="PTHR43201">
    <property type="entry name" value="ACYL-COA SYNTHETASE"/>
    <property type="match status" value="1"/>
</dbReference>
<dbReference type="PANTHER" id="PTHR43201:SF8">
    <property type="entry name" value="ACYL-COA SYNTHETASE FAMILY MEMBER 3"/>
    <property type="match status" value="1"/>
</dbReference>
<dbReference type="Pfam" id="PF00501">
    <property type="entry name" value="AMP-binding"/>
    <property type="match status" value="1"/>
</dbReference>
<dbReference type="SUPFAM" id="SSF56801">
    <property type="entry name" value="Acetyl-CoA synthetase-like"/>
    <property type="match status" value="1"/>
</dbReference>
<dbReference type="PROSITE" id="PS00455">
    <property type="entry name" value="AMP_BINDING"/>
    <property type="match status" value="1"/>
</dbReference>
<reference key="1">
    <citation type="journal article" date="2005" name="Nature">
        <title>Genome sequencing and analysis of Aspergillus oryzae.</title>
        <authorList>
            <person name="Machida M."/>
            <person name="Asai K."/>
            <person name="Sano M."/>
            <person name="Tanaka T."/>
            <person name="Kumagai T."/>
            <person name="Terai G."/>
            <person name="Kusumoto K."/>
            <person name="Arima T."/>
            <person name="Akita O."/>
            <person name="Kashiwagi Y."/>
            <person name="Abe K."/>
            <person name="Gomi K."/>
            <person name="Horiuchi H."/>
            <person name="Kitamoto K."/>
            <person name="Kobayashi T."/>
            <person name="Takeuchi M."/>
            <person name="Denning D.W."/>
            <person name="Galagan J.E."/>
            <person name="Nierman W.C."/>
            <person name="Yu J."/>
            <person name="Archer D.B."/>
            <person name="Bennett J.W."/>
            <person name="Bhatnagar D."/>
            <person name="Cleveland T.E."/>
            <person name="Fedorova N.D."/>
            <person name="Gotoh O."/>
            <person name="Horikawa H."/>
            <person name="Hosoyama A."/>
            <person name="Ichinomiya M."/>
            <person name="Igarashi R."/>
            <person name="Iwashita K."/>
            <person name="Juvvadi P.R."/>
            <person name="Kato M."/>
            <person name="Kato Y."/>
            <person name="Kin T."/>
            <person name="Kokubun A."/>
            <person name="Maeda H."/>
            <person name="Maeyama N."/>
            <person name="Maruyama J."/>
            <person name="Nagasaki H."/>
            <person name="Nakajima T."/>
            <person name="Oda K."/>
            <person name="Okada K."/>
            <person name="Paulsen I."/>
            <person name="Sakamoto K."/>
            <person name="Sawano T."/>
            <person name="Takahashi M."/>
            <person name="Takase K."/>
            <person name="Terabayashi Y."/>
            <person name="Wortman J.R."/>
            <person name="Yamada O."/>
            <person name="Yamagata Y."/>
            <person name="Anazawa H."/>
            <person name="Hata Y."/>
            <person name="Koide Y."/>
            <person name="Komori T."/>
            <person name="Koyama Y."/>
            <person name="Minetoki T."/>
            <person name="Suharnan S."/>
            <person name="Tanaka A."/>
            <person name="Isono K."/>
            <person name="Kuhara S."/>
            <person name="Ogasawara N."/>
            <person name="Kikuchi H."/>
        </authorList>
    </citation>
    <scope>NUCLEOTIDE SEQUENCE [LARGE SCALE GENOMIC DNA]</scope>
    <source>
        <strain>ATCC 42149 / RIB 40</strain>
    </source>
</reference>
<reference key="2">
    <citation type="journal article" date="2018" name="J. Fungi">
        <title>Oryzines A &amp; B, maleidride congeners from Aspergillus oryzae and their putative biosynthesis.</title>
        <authorList>
            <person name="Wasil Z."/>
            <person name="Kuhnert E."/>
            <person name="Simpson T.J."/>
            <person name="Cox R.J."/>
        </authorList>
    </citation>
    <scope>FUNCTION</scope>
    <scope>PATHWAY</scope>
</reference>